<feature type="chain" id="PRO_0000166779" description="Alkyl hydroperoxide reductase subunit F">
    <location>
        <begin position="1"/>
        <end position="507"/>
    </location>
</feature>
<feature type="binding site" evidence="1">
    <location>
        <begin position="207"/>
        <end position="222"/>
    </location>
    <ligand>
        <name>FAD</name>
        <dbReference type="ChEBI" id="CHEBI:57692"/>
    </ligand>
</feature>
<feature type="binding site" evidence="1">
    <location>
        <begin position="347"/>
        <end position="361"/>
    </location>
    <ligand>
        <name>NAD(+)</name>
        <dbReference type="ChEBI" id="CHEBI:57540"/>
    </ligand>
</feature>
<feature type="binding site" evidence="1">
    <location>
        <begin position="467"/>
        <end position="477"/>
    </location>
    <ligand>
        <name>FAD</name>
        <dbReference type="ChEBI" id="CHEBI:57692"/>
    </ligand>
</feature>
<feature type="disulfide bond" description="Redox-active" evidence="1">
    <location>
        <begin position="335"/>
        <end position="338"/>
    </location>
</feature>
<dbReference type="EC" id="1.8.1.-"/>
<dbReference type="EMBL" id="BA000017">
    <property type="protein sequence ID" value="BAB56542.1"/>
    <property type="molecule type" value="Genomic_DNA"/>
</dbReference>
<dbReference type="RefSeq" id="WP_000930514.1">
    <property type="nucleotide sequence ID" value="NC_002758.2"/>
</dbReference>
<dbReference type="SMR" id="P66012"/>
<dbReference type="KEGG" id="sav:SAV0380"/>
<dbReference type="HOGENOM" id="CLU_031864_4_2_9"/>
<dbReference type="PhylomeDB" id="P66012"/>
<dbReference type="Proteomes" id="UP000002481">
    <property type="component" value="Chromosome"/>
</dbReference>
<dbReference type="GO" id="GO:0050660">
    <property type="term" value="F:flavin adenine dinucleotide binding"/>
    <property type="evidence" value="ECO:0007669"/>
    <property type="project" value="InterPro"/>
</dbReference>
<dbReference type="GO" id="GO:0051287">
    <property type="term" value="F:NAD binding"/>
    <property type="evidence" value="ECO:0007669"/>
    <property type="project" value="InterPro"/>
</dbReference>
<dbReference type="GO" id="GO:0102039">
    <property type="term" value="F:NADH-dependent peroxiredoxin activity"/>
    <property type="evidence" value="ECO:0007669"/>
    <property type="project" value="InterPro"/>
</dbReference>
<dbReference type="GO" id="GO:0016668">
    <property type="term" value="F:oxidoreductase activity, acting on a sulfur group of donors, NAD(P) as acceptor"/>
    <property type="evidence" value="ECO:0007669"/>
    <property type="project" value="UniProtKB-ARBA"/>
</dbReference>
<dbReference type="GO" id="GO:0000302">
    <property type="term" value="P:response to reactive oxygen species"/>
    <property type="evidence" value="ECO:0007669"/>
    <property type="project" value="InterPro"/>
</dbReference>
<dbReference type="CDD" id="cd03026">
    <property type="entry name" value="AhpF_NTD_C"/>
    <property type="match status" value="1"/>
</dbReference>
<dbReference type="CDD" id="cd02974">
    <property type="entry name" value="AhpF_NTD_N"/>
    <property type="match status" value="1"/>
</dbReference>
<dbReference type="FunFam" id="3.50.50.60:FF:000007">
    <property type="entry name" value="Alkyl hydroperoxide reductase, F subunit"/>
    <property type="match status" value="1"/>
</dbReference>
<dbReference type="Gene3D" id="3.40.30.80">
    <property type="match status" value="1"/>
</dbReference>
<dbReference type="Gene3D" id="3.50.50.60">
    <property type="entry name" value="FAD/NAD(P)-binding domain"/>
    <property type="match status" value="2"/>
</dbReference>
<dbReference type="InterPro" id="IPR044141">
    <property type="entry name" value="AhpF_NTD_C"/>
</dbReference>
<dbReference type="InterPro" id="IPR044142">
    <property type="entry name" value="AhpF_NTD_N"/>
</dbReference>
<dbReference type="InterPro" id="IPR012081">
    <property type="entry name" value="Alkyl_hydroperoxide_Rdtase_suF"/>
</dbReference>
<dbReference type="InterPro" id="IPR036188">
    <property type="entry name" value="FAD/NAD-bd_sf"/>
</dbReference>
<dbReference type="InterPro" id="IPR023753">
    <property type="entry name" value="FAD/NAD-binding_dom"/>
</dbReference>
<dbReference type="InterPro" id="IPR050097">
    <property type="entry name" value="Ferredoxin-NADP_redctase_2"/>
</dbReference>
<dbReference type="InterPro" id="IPR008255">
    <property type="entry name" value="Pyr_nucl-diS_OxRdtase_2_AS"/>
</dbReference>
<dbReference type="InterPro" id="IPR012336">
    <property type="entry name" value="Thioredoxin-like_fold"/>
</dbReference>
<dbReference type="InterPro" id="IPR036249">
    <property type="entry name" value="Thioredoxin-like_sf"/>
</dbReference>
<dbReference type="NCBIfam" id="TIGR03140">
    <property type="entry name" value="AhpF"/>
    <property type="match status" value="1"/>
</dbReference>
<dbReference type="PANTHER" id="PTHR48105">
    <property type="entry name" value="THIOREDOXIN REDUCTASE 1-RELATED-RELATED"/>
    <property type="match status" value="1"/>
</dbReference>
<dbReference type="Pfam" id="PF07992">
    <property type="entry name" value="Pyr_redox_2"/>
    <property type="match status" value="1"/>
</dbReference>
<dbReference type="Pfam" id="PF13192">
    <property type="entry name" value="Thioredoxin_3"/>
    <property type="match status" value="1"/>
</dbReference>
<dbReference type="PIRSF" id="PIRSF000238">
    <property type="entry name" value="AhpF"/>
    <property type="match status" value="1"/>
</dbReference>
<dbReference type="PRINTS" id="PR00368">
    <property type="entry name" value="FADPNR"/>
</dbReference>
<dbReference type="PRINTS" id="PR00469">
    <property type="entry name" value="PNDRDTASEII"/>
</dbReference>
<dbReference type="SUPFAM" id="SSF51905">
    <property type="entry name" value="FAD/NAD(P)-binding domain"/>
    <property type="match status" value="1"/>
</dbReference>
<dbReference type="SUPFAM" id="SSF52833">
    <property type="entry name" value="Thioredoxin-like"/>
    <property type="match status" value="2"/>
</dbReference>
<dbReference type="PROSITE" id="PS51354">
    <property type="entry name" value="GLUTAREDOXIN_2"/>
    <property type="match status" value="1"/>
</dbReference>
<dbReference type="PROSITE" id="PS00573">
    <property type="entry name" value="PYRIDINE_REDOX_2"/>
    <property type="match status" value="1"/>
</dbReference>
<keyword id="KW-1015">Disulfide bond</keyword>
<keyword id="KW-0274">FAD</keyword>
<keyword id="KW-0285">Flavoprotein</keyword>
<keyword id="KW-0520">NAD</keyword>
<keyword id="KW-0521">NADP</keyword>
<keyword id="KW-0560">Oxidoreductase</keyword>
<keyword id="KW-0676">Redox-active center</keyword>
<organism>
    <name type="scientific">Staphylococcus aureus (strain Mu50 / ATCC 700699)</name>
    <dbReference type="NCBI Taxonomy" id="158878"/>
    <lineage>
        <taxon>Bacteria</taxon>
        <taxon>Bacillati</taxon>
        <taxon>Bacillota</taxon>
        <taxon>Bacilli</taxon>
        <taxon>Bacillales</taxon>
        <taxon>Staphylococcaceae</taxon>
        <taxon>Staphylococcus</taxon>
    </lineage>
</organism>
<accession>P66012</accession>
<accession>Q99WJ7</accession>
<evidence type="ECO:0000250" key="1"/>
<evidence type="ECO:0000305" key="2"/>
<proteinExistence type="inferred from homology"/>
<protein>
    <recommendedName>
        <fullName>Alkyl hydroperoxide reductase subunit F</fullName>
        <ecNumber>1.8.1.-</ecNumber>
    </recommendedName>
</protein>
<name>AHPF_STAAM</name>
<gene>
    <name type="primary">ahpF</name>
    <name type="ordered locus">SAV0380</name>
</gene>
<comment type="function">
    <text evidence="1">Serves to protect the cell against DNA damage by alkyl hydroperoxides. It can use either NADH or NADPH as electron donor for direct reduction of redox dyes or of alkyl hydroperoxides when combined with the AhpC protein (By similarity).</text>
</comment>
<comment type="cofactor">
    <cofactor evidence="1">
        <name>FAD</name>
        <dbReference type="ChEBI" id="CHEBI:57692"/>
    </cofactor>
    <text evidence="1">Binds 1 FAD per subunit.</text>
</comment>
<comment type="subunit">
    <text evidence="1">Homodimer.</text>
</comment>
<comment type="miscellaneous">
    <text>The active site is a redox-active disulfide bond.</text>
</comment>
<comment type="similarity">
    <text evidence="2">Belongs to the class-II pyridine nucleotide-disulfide oxidoreductase family.</text>
</comment>
<sequence length="507" mass="54708">MLNADLKQQLKQLLELMEGNVEFVASLGSDEKSKELKELLTEISDMSPRLSLSEKSLKRTPSFSVNRPGEETGVTFAGIPLGHEFNSLVLAILQVSGRAPKEKQSIIDQIKNLEGSFHFETFISLTCQKCPDVVQALNLMSVINPNITHSMIDGAVFREESENIMAVPAVFLNGEEFGNGRMTIQDILSKLGSTADASEFENKEPYDVLIVGGGPASGSAAIYTARKGLRTGIVADRIGGQVNDTAGIENFITVKETTGSEFSSNLAAHIDQYDIDAMTGIRATDIEKTDEAIKVTLENGAVLESKTVIIATGAGWRKLNIPGEEQLINKGVAFCPHCDGPLFENKDVAVIGGGNSGVEAAIDLAGIVNHVTLFEFASELKADNVLQDRLRSLSNVDIKTNAKTTEVVGEDHVTGIRYEDMSTGEEHLLNLDGIFVQIGLLPNTSWLKDAVELNERGEIVIDRNNNTNVPGIFAAGDVTDQKNKQIIISMGAGANAALNAFDYIIRN</sequence>
<reference key="1">
    <citation type="journal article" date="2001" name="Lancet">
        <title>Whole genome sequencing of meticillin-resistant Staphylococcus aureus.</title>
        <authorList>
            <person name="Kuroda M."/>
            <person name="Ohta T."/>
            <person name="Uchiyama I."/>
            <person name="Baba T."/>
            <person name="Yuzawa H."/>
            <person name="Kobayashi I."/>
            <person name="Cui L."/>
            <person name="Oguchi A."/>
            <person name="Aoki K."/>
            <person name="Nagai Y."/>
            <person name="Lian J.-Q."/>
            <person name="Ito T."/>
            <person name="Kanamori M."/>
            <person name="Matsumaru H."/>
            <person name="Maruyama A."/>
            <person name="Murakami H."/>
            <person name="Hosoyama A."/>
            <person name="Mizutani-Ui Y."/>
            <person name="Takahashi N.K."/>
            <person name="Sawano T."/>
            <person name="Inoue R."/>
            <person name="Kaito C."/>
            <person name="Sekimizu K."/>
            <person name="Hirakawa H."/>
            <person name="Kuhara S."/>
            <person name="Goto S."/>
            <person name="Yabuzaki J."/>
            <person name="Kanehisa M."/>
            <person name="Yamashita A."/>
            <person name="Oshima K."/>
            <person name="Furuya K."/>
            <person name="Yoshino C."/>
            <person name="Shiba T."/>
            <person name="Hattori M."/>
            <person name="Ogasawara N."/>
            <person name="Hayashi H."/>
            <person name="Hiramatsu K."/>
        </authorList>
    </citation>
    <scope>NUCLEOTIDE SEQUENCE [LARGE SCALE GENOMIC DNA]</scope>
    <source>
        <strain>Mu50 / ATCC 700699</strain>
    </source>
</reference>